<comment type="similarity">
    <text evidence="1">Belongs to the UPF0261 family.</text>
</comment>
<evidence type="ECO:0000255" key="1">
    <source>
        <dbReference type="HAMAP-Rule" id="MF_00677"/>
    </source>
</evidence>
<feature type="chain" id="PRO_0000220210" description="UPF0261 protein BRA1168/BS1330_II1159">
    <location>
        <begin position="1"/>
        <end position="418"/>
    </location>
</feature>
<organism>
    <name type="scientific">Brucella suis biovar 1 (strain 1330)</name>
    <dbReference type="NCBI Taxonomy" id="204722"/>
    <lineage>
        <taxon>Bacteria</taxon>
        <taxon>Pseudomonadati</taxon>
        <taxon>Pseudomonadota</taxon>
        <taxon>Alphaproteobacteria</taxon>
        <taxon>Hyphomicrobiales</taxon>
        <taxon>Brucellaceae</taxon>
        <taxon>Brucella/Ochrobactrum group</taxon>
        <taxon>Brucella</taxon>
    </lineage>
</organism>
<protein>
    <recommendedName>
        <fullName evidence="1">UPF0261 protein BRA1168/BS1330_II1159</fullName>
    </recommendedName>
</protein>
<accession>Q8FUQ2</accession>
<accession>G0KEG4</accession>
<dbReference type="EMBL" id="AE014292">
    <property type="protein sequence ID" value="AAN34326.1"/>
    <property type="molecule type" value="Genomic_DNA"/>
</dbReference>
<dbReference type="EMBL" id="CP002998">
    <property type="protein sequence ID" value="AEM20602.1"/>
    <property type="molecule type" value="Genomic_DNA"/>
</dbReference>
<dbReference type="RefSeq" id="WP_004692683.1">
    <property type="nucleotide sequence ID" value="NZ_KN046805.1"/>
</dbReference>
<dbReference type="SMR" id="Q8FUQ2"/>
<dbReference type="KEGG" id="bms:BRA1168"/>
<dbReference type="KEGG" id="bsi:BS1330_II1159"/>
<dbReference type="PATRIC" id="fig|204722.21.peg.258"/>
<dbReference type="HOGENOM" id="CLU_036813_1_0_5"/>
<dbReference type="PhylomeDB" id="Q8FUQ2"/>
<dbReference type="Proteomes" id="UP000007104">
    <property type="component" value="Chromosome II"/>
</dbReference>
<dbReference type="CDD" id="cd15488">
    <property type="entry name" value="Tm-1-like"/>
    <property type="match status" value="1"/>
</dbReference>
<dbReference type="Gene3D" id="3.40.50.12030">
    <property type="entry name" value="Uncharacterised protein family UPF0261, NC domain"/>
    <property type="match status" value="1"/>
</dbReference>
<dbReference type="Gene3D" id="3.40.50.12020">
    <property type="entry name" value="Uncharacterised protein family UPF0261, NN domain"/>
    <property type="match status" value="1"/>
</dbReference>
<dbReference type="HAMAP" id="MF_00677">
    <property type="entry name" value="UPF0261"/>
    <property type="match status" value="1"/>
</dbReference>
<dbReference type="InterPro" id="IPR051353">
    <property type="entry name" value="Tobamovirus_resist_UPF0261"/>
</dbReference>
<dbReference type="InterPro" id="IPR008322">
    <property type="entry name" value="UPF0261"/>
</dbReference>
<dbReference type="InterPro" id="IPR056778">
    <property type="entry name" value="UPF0261_C"/>
</dbReference>
<dbReference type="InterPro" id="IPR044122">
    <property type="entry name" value="UPF0261_N"/>
</dbReference>
<dbReference type="NCBIfam" id="NF002674">
    <property type="entry name" value="PRK02399.1-2"/>
    <property type="match status" value="1"/>
</dbReference>
<dbReference type="NCBIfam" id="NF002676">
    <property type="entry name" value="PRK02399.1-4"/>
    <property type="match status" value="1"/>
</dbReference>
<dbReference type="PANTHER" id="PTHR31862">
    <property type="entry name" value="UPF0261 DOMAIN PROTEIN (AFU_ORTHOLOGUE AFUA_1G10120)"/>
    <property type="match status" value="1"/>
</dbReference>
<dbReference type="PANTHER" id="PTHR31862:SF1">
    <property type="entry name" value="UPF0261 DOMAIN PROTEIN (AFU_ORTHOLOGUE AFUA_1G10120)"/>
    <property type="match status" value="1"/>
</dbReference>
<dbReference type="Pfam" id="PF06792">
    <property type="entry name" value="UPF0261"/>
    <property type="match status" value="1"/>
</dbReference>
<dbReference type="Pfam" id="PF23189">
    <property type="entry name" value="UPF0261_C"/>
    <property type="match status" value="1"/>
</dbReference>
<dbReference type="PIRSF" id="PIRSF033271">
    <property type="entry name" value="UCP033271"/>
    <property type="match status" value="1"/>
</dbReference>
<gene>
    <name type="ordered locus">BRA1168</name>
    <name type="ordered locus">BS1330_II1159</name>
</gene>
<sequence length="418" mass="44262">MTAHTNSPRILVIGTGDTKSDELLFMADVIERAGGSPVMIDVSILGNPPYEPAYSKHDVAEAAGTTVQAIIDSGDEHSAMALMAEGATALVRGLSQRGQVDGMIALGGSLGTDLALDIAAILPLGVPKFIVSTIAYSHLLPPERIAPDLMMILWAGGLYGLNPICRSVLSQACGAVVGAAKLVEKPSAEKPLIGMTSLGSSCLKYMRFLKPELEKRGYDVAIFHATGMGGRAYEAVAAQKGFVAVFDFCIQEVTNAESGSVVTSGPDRMENAERAGIPQIIAPGAVDMVDMPAWQNVPEQFRDRPYHAHNRLIASITVSPEQRRAVARVVAAKLERAAAPVAFILPTGGVQERDRNGEPLHEPEALGAFLDEMRGAVSGTITFEEVDAHINAPEFASRALAVFDRWVAEGIVVKGNVA</sequence>
<name>Y4168_BRUSU</name>
<reference key="1">
    <citation type="journal article" date="2002" name="Proc. Natl. Acad. Sci. U.S.A.">
        <title>The Brucella suis genome reveals fundamental similarities between animal and plant pathogens and symbionts.</title>
        <authorList>
            <person name="Paulsen I.T."/>
            <person name="Seshadri R."/>
            <person name="Nelson K.E."/>
            <person name="Eisen J.A."/>
            <person name="Heidelberg J.F."/>
            <person name="Read T.D."/>
            <person name="Dodson R.J."/>
            <person name="Umayam L.A."/>
            <person name="Brinkac L.M."/>
            <person name="Beanan M.J."/>
            <person name="Daugherty S.C."/>
            <person name="DeBoy R.T."/>
            <person name="Durkin A.S."/>
            <person name="Kolonay J.F."/>
            <person name="Madupu R."/>
            <person name="Nelson W.C."/>
            <person name="Ayodeji B."/>
            <person name="Kraul M."/>
            <person name="Shetty J."/>
            <person name="Malek J.A."/>
            <person name="Van Aken S.E."/>
            <person name="Riedmuller S."/>
            <person name="Tettelin H."/>
            <person name="Gill S.R."/>
            <person name="White O."/>
            <person name="Salzberg S.L."/>
            <person name="Hoover D.L."/>
            <person name="Lindler L.E."/>
            <person name="Halling S.M."/>
            <person name="Boyle S.M."/>
            <person name="Fraser C.M."/>
        </authorList>
    </citation>
    <scope>NUCLEOTIDE SEQUENCE [LARGE SCALE GENOMIC DNA]</scope>
    <source>
        <strain>1330</strain>
    </source>
</reference>
<reference key="2">
    <citation type="journal article" date="2011" name="J. Bacteriol.">
        <title>Revised genome sequence of Brucella suis 1330.</title>
        <authorList>
            <person name="Tae H."/>
            <person name="Shallom S."/>
            <person name="Settlage R."/>
            <person name="Preston D."/>
            <person name="Adams L.G."/>
            <person name="Garner H.R."/>
        </authorList>
    </citation>
    <scope>NUCLEOTIDE SEQUENCE [LARGE SCALE GENOMIC DNA]</scope>
    <source>
        <strain>1330</strain>
    </source>
</reference>
<proteinExistence type="inferred from homology"/>